<dbReference type="EMBL" id="Z15129">
    <property type="protein sequence ID" value="CAA78831.1"/>
    <property type="molecule type" value="Genomic_DNA"/>
</dbReference>
<dbReference type="PIR" id="JN0819">
    <property type="entry name" value="JN0819"/>
</dbReference>
<dbReference type="SMR" id="Q06987"/>
<dbReference type="GO" id="GO:0009279">
    <property type="term" value="C:cell outer membrane"/>
    <property type="evidence" value="ECO:0007669"/>
    <property type="project" value="UniProtKB-SubCell"/>
</dbReference>
<dbReference type="GO" id="GO:0015091">
    <property type="term" value="F:ferric iron transmembrane transporter activity"/>
    <property type="evidence" value="ECO:0007669"/>
    <property type="project" value="InterPro"/>
</dbReference>
<dbReference type="GO" id="GO:0015344">
    <property type="term" value="F:siderophore uptake transmembrane transporter activity"/>
    <property type="evidence" value="ECO:0007669"/>
    <property type="project" value="TreeGrafter"/>
</dbReference>
<dbReference type="CDD" id="cd01347">
    <property type="entry name" value="ligand_gated_channel"/>
    <property type="match status" value="1"/>
</dbReference>
<dbReference type="Gene3D" id="2.40.170.20">
    <property type="entry name" value="TonB-dependent receptor, beta-barrel domain"/>
    <property type="match status" value="1"/>
</dbReference>
<dbReference type="Gene3D" id="2.170.130.10">
    <property type="entry name" value="TonB-dependent receptor, plug domain"/>
    <property type="match status" value="1"/>
</dbReference>
<dbReference type="InterPro" id="IPR012910">
    <property type="entry name" value="Plug_dom"/>
</dbReference>
<dbReference type="InterPro" id="IPR037066">
    <property type="entry name" value="Plug_dom_sf"/>
</dbReference>
<dbReference type="InterPro" id="IPR039426">
    <property type="entry name" value="TonB-dep_rcpt-like"/>
</dbReference>
<dbReference type="InterPro" id="IPR000531">
    <property type="entry name" value="TonB-dep_rcpt_b-brl"/>
</dbReference>
<dbReference type="InterPro" id="IPR010916">
    <property type="entry name" value="TonB_box_CS"/>
</dbReference>
<dbReference type="InterPro" id="IPR010949">
    <property type="entry name" value="TonB_Hb/transfer/lactofer_rcpt"/>
</dbReference>
<dbReference type="InterPro" id="IPR010948">
    <property type="entry name" value="TonB_lacto/transferrin_rcpt"/>
</dbReference>
<dbReference type="InterPro" id="IPR036942">
    <property type="entry name" value="TonB_rcpt_b-brl_sf"/>
</dbReference>
<dbReference type="InterPro" id="IPR010917">
    <property type="entry name" value="TonB_rcpt_CS"/>
</dbReference>
<dbReference type="NCBIfam" id="TIGR01786">
    <property type="entry name" value="TonB-hemlactrns"/>
    <property type="match status" value="1"/>
</dbReference>
<dbReference type="NCBIfam" id="TIGR01776">
    <property type="entry name" value="TonB-tbp-lbp"/>
    <property type="match status" value="1"/>
</dbReference>
<dbReference type="PANTHER" id="PTHR30069">
    <property type="entry name" value="TONB-DEPENDENT OUTER MEMBRANE RECEPTOR"/>
    <property type="match status" value="1"/>
</dbReference>
<dbReference type="PANTHER" id="PTHR30069:SF54">
    <property type="entry name" value="TRANSFERRIN-BINDING PROTEIN A"/>
    <property type="match status" value="1"/>
</dbReference>
<dbReference type="Pfam" id="PF07715">
    <property type="entry name" value="Plug"/>
    <property type="match status" value="1"/>
</dbReference>
<dbReference type="Pfam" id="PF00593">
    <property type="entry name" value="TonB_dep_Rec_b-barrel"/>
    <property type="match status" value="1"/>
</dbReference>
<dbReference type="SUPFAM" id="SSF56935">
    <property type="entry name" value="Porins"/>
    <property type="match status" value="1"/>
</dbReference>
<dbReference type="PROSITE" id="PS00430">
    <property type="entry name" value="TONB_DEPENDENT_REC_1"/>
    <property type="match status" value="1"/>
</dbReference>
<dbReference type="PROSITE" id="PS01156">
    <property type="entry name" value="TONB_DEPENDENT_REC_2"/>
    <property type="match status" value="1"/>
</dbReference>
<dbReference type="PROSITE" id="PS52016">
    <property type="entry name" value="TONB_DEPENDENT_REC_3"/>
    <property type="match status" value="1"/>
</dbReference>
<reference key="1">
    <citation type="journal article" date="1993" name="Gene">
        <title>Cloning and characterization of Neisseria meningitidis genes encoding the transferrin-binding proteins Tbp1 and Tbp2.</title>
        <authorList>
            <person name="Legrain M."/>
            <person name="Mazarin V."/>
            <person name="Irwin S.W."/>
            <person name="Bouchon B."/>
            <person name="Quentin-Millet M.-J."/>
            <person name="Jacobs E."/>
            <person name="Schryvers A.B."/>
        </authorList>
    </citation>
    <scope>NUCLEOTIDE SEQUENCE [GENOMIC DNA]</scope>
    <scope>PROTEIN SEQUENCE OF 25-42</scope>
    <scope>SUBCELLULAR LOCATION</scope>
    <source>
        <strain>CCUG 37603 / B16B6 / Serogroup B / Serotype 2a</strain>
    </source>
</reference>
<reference key="2">
    <citation type="journal article" date="1993" name="FEMS Microbiol. Lett.">
        <title>Antigenic relationships of transferrin-binding proteins from Neisseria meningitidis, N. gonorrhoeae and Haemophilus influenzae: cross-reactivity of antibodies to NH2-terminal peptides.</title>
        <authorList>
            <person name="Griffiths E."/>
            <person name="Stevenson P."/>
            <person name="Byfield P."/>
            <person name="Ala'Aldeen D.A.A."/>
            <person name="Borriello S.P."/>
            <person name="Holland J."/>
            <person name="Parsons T."/>
            <person name="Williams P."/>
        </authorList>
    </citation>
    <scope>PROTEIN SEQUENCE OF 25-45</scope>
    <source>
        <strain>CCUG 37603 / B16B6 / Serogroup B / Serotype 2a</strain>
    </source>
</reference>
<reference key="3">
    <citation type="journal article" date="1990" name="Can. J. Microbiol.">
        <title>Receptors for transferrin in pathogenic bacteria are specific for the host's protein.</title>
        <authorList>
            <person name="Schryvers A.B."/>
            <person name="Gonzalez G.C."/>
        </authorList>
    </citation>
    <scope>HOST-SPECIFICITY</scope>
</reference>
<gene>
    <name evidence="6" type="primary">tbp1</name>
</gene>
<sequence length="908" mass="101583">MQQQHLFRLNILCLSLMTALPVYAENVQAEQAQEKQLDTIQVKAKKQKTRRDNEVTGLGKLVKSSDTLSKEQVLNIRDLTRYDPGIAVVEQGRGASSGYSIRGMDKNRVSLTVDGVSQIQSYTAQAALGGTRTAGSSGAINEIEYENVKAVEISKGSNSSEYGNGALAGSVAFQTKTAADIIGEGKQWGIQSKTAYSGKDHALTQSLALAGRSGGAEALLIYTKRRGREIHAHKDAGKGVQSFNRLVLDEDKKEGGSQYRYFIVEEECHNGYAACKNKLKEDASVKDERKTVSTQDYTGSNRLLANPLEYGSQSWLFRPGWHLDNRHYVGAVLERTQQTFDTRDMTVPAYFTSEDYVPGSLKGLGKYSGDNKAERLFVQGEGSTLQGIGYGTGVFYDERHTKNRYGVEYVYHNADKDTWADYARLSYDRQGIDLDNRLQQTHCSHDGSDKNCRPDGNKPYSFYKSDRMIYEESRNLFQAVFKKAFDTAKIRHNLSINLGYDRFKSQLSHSDYYLQNAVQAYDLITPKKPPFPNGSKDNPYRVSIGKTTVNTSPICRFGNNTYTDCTPRNIGGNGYYAAVQDNVRLGRWADVGAGIRYDYRSTHSEDKSVSTGTHRNLSWNAGVVLKPFTWMDLTYRASTGFRLPSFAEMYGWRAGESLKTLDLKPEKSFNREAGIVFKGDFGNLEASYFNNAYRDLIAFGYETRTQNGQTSASGDPGYRNAQNARIAGINILGKIDWHGVWGGLPDGLYSTLAYNRIKVKDADIRADRTFVTSYLFDAVQPSRYVLGLGYDHPDGIWGINTMFTYSKAKSVDELLGSQALLNGNANAKKAASRRTRPWYVTDVSGYYNIKKHLTLRAGVYNLLNYRYVTWENVRQTAGGAVNQHKNVGVYNRYAAPGRNYTFSLEMKF</sequence>
<proteinExistence type="evidence at protein level"/>
<protein>
    <recommendedName>
        <fullName evidence="7">Transferrin-binding protein A</fullName>
        <shortName evidence="7">TbpA</shortName>
    </recommendedName>
    <alternativeName>
        <fullName evidence="6">Transferrin-binding protein 1</fullName>
    </alternativeName>
</protein>
<name>TBPA2_NEIMI</name>
<organism>
    <name type="scientific">Neisseria meningitidis serogroup B</name>
    <dbReference type="NCBI Taxonomy" id="491"/>
    <lineage>
        <taxon>Bacteria</taxon>
        <taxon>Pseudomonadati</taxon>
        <taxon>Pseudomonadota</taxon>
        <taxon>Betaproteobacteria</taxon>
        <taxon>Neisseriales</taxon>
        <taxon>Neisseriaceae</taxon>
        <taxon>Neisseria</taxon>
    </lineage>
</organism>
<comment type="function">
    <text evidence="1">Neisseria acquires iron by extracting it from serum transferrin (TF) in its human host. Acts as a TF receptor and is required for TF utilization. Binds both apo- and holo-TF, via the TF C-terminus.</text>
</comment>
<comment type="subunit">
    <text evidence="1">Binds both human apo- and holo-transferrin (TF), via the TF C-terminus. Forms a large complex with TF and TbpB.</text>
</comment>
<comment type="subcellular location">
    <subcellularLocation>
        <location evidence="2 8">Cell outer membrane</location>
        <topology evidence="1 2">Multi-pass membrane protein</topology>
    </subcellularLocation>
</comment>
<comment type="induction">
    <text>By iron starvation.</text>
</comment>
<comment type="miscellaneous">
    <text evidence="3">N.meningitidis cells will only bind to human TF, not bovine or porcine TF, explaining at least in part the bacteria's inability to cause infection in non-human hosts.</text>
</comment>
<comment type="similarity">
    <text evidence="7">Belongs to the TonB-dependent receptor family.</text>
</comment>
<keyword id="KW-0998">Cell outer membrane</keyword>
<keyword id="KW-0903">Direct protein sequencing</keyword>
<keyword id="KW-0472">Membrane</keyword>
<keyword id="KW-0675">Receptor</keyword>
<keyword id="KW-0732">Signal</keyword>
<keyword id="KW-0798">TonB box</keyword>
<keyword id="KW-0812">Transmembrane</keyword>
<keyword id="KW-1134">Transmembrane beta strand</keyword>
<keyword id="KW-0813">Transport</keyword>
<keyword id="KW-0843">Virulence</keyword>
<evidence type="ECO:0000250" key="1">
    <source>
        <dbReference type="UniProtKB" id="Q9K0U9"/>
    </source>
</evidence>
<evidence type="ECO:0000255" key="2">
    <source>
        <dbReference type="PROSITE-ProRule" id="PRU01360"/>
    </source>
</evidence>
<evidence type="ECO:0000269" key="3">
    <source>
    </source>
</evidence>
<evidence type="ECO:0000269" key="4">
    <source>
    </source>
</evidence>
<evidence type="ECO:0000269" key="5">
    <source>
    </source>
</evidence>
<evidence type="ECO:0000303" key="6">
    <source>
    </source>
</evidence>
<evidence type="ECO:0000305" key="7"/>
<evidence type="ECO:0000305" key="8">
    <source>
    </source>
</evidence>
<feature type="signal peptide" evidence="4 5">
    <location>
        <begin position="1"/>
        <end position="24"/>
    </location>
</feature>
<feature type="chain" id="PRO_0000034775" description="Transferrin-binding protein A">
    <location>
        <begin position="25"/>
        <end position="908"/>
    </location>
</feature>
<feature type="domain" description="TBDR plug" evidence="2">
    <location>
        <begin position="51"/>
        <end position="176"/>
    </location>
</feature>
<feature type="domain" description="TBDR beta-barrel" evidence="2">
    <location>
        <begin position="187"/>
        <end position="908"/>
    </location>
</feature>
<feature type="short sequence motif" description="TonB box">
    <location>
        <begin position="38"/>
        <end position="45"/>
    </location>
</feature>
<feature type="short sequence motif" description="TonB C-terminal box">
    <location>
        <begin position="891"/>
        <end position="908"/>
    </location>
</feature>
<accession>Q06987</accession>